<sequence length="499" mass="52627">MSDTVKVGFVPLSTAPRGILVAFCDESLRLGAATDKALGGAAELIQRAAAAARFKGKDGAVLDLLAPQGIKIQRLLVIGTGKSGDHKEKDFLKYGGTLAGKLNAGTEPVMVMAELPSGPMTPDQASSLAAGIRLRAYRFDRYKTKKKDEEAAVSAAISLAVADVAAAKKAFAPRSHVTDGVILARDLVNEPPNVLYPEEFAKRASALRKLGVTVEILDVPAMKKLGMGALLGVGQGSARPSRTVVMRYNGGKKGDQPVAFIGKGVCFDTGGISIKPAGSMEDMKGDMGGAACVVGLMHALAARKAKANVIGAIGLVENMPDGNAQRPGDIVTSMSGQTIEIINTDAEGRLVLADVLWYVATKFKPKFMIDLATLTGAIMVALGTEHAGLFANNDDLAEKLLKAGQETGEKVWRMPLGPEYDKLIDSQFADMKNTGGRHGGSITAAQFLQRFVSDTPWAHLDIAGTAMGAPKSEVNQSWGSGYGVRLLDRLVWDCYEARS</sequence>
<feature type="chain" id="PRO_1000019887" description="Probable cytosol aminopeptidase">
    <location>
        <begin position="1"/>
        <end position="499"/>
    </location>
</feature>
<feature type="active site" evidence="1">
    <location>
        <position position="275"/>
    </location>
</feature>
<feature type="active site" evidence="1">
    <location>
        <position position="349"/>
    </location>
</feature>
<feature type="binding site" evidence="1">
    <location>
        <position position="263"/>
    </location>
    <ligand>
        <name>Mn(2+)</name>
        <dbReference type="ChEBI" id="CHEBI:29035"/>
        <label>2</label>
    </ligand>
</feature>
<feature type="binding site" evidence="1">
    <location>
        <position position="268"/>
    </location>
    <ligand>
        <name>Mn(2+)</name>
        <dbReference type="ChEBI" id="CHEBI:29035"/>
        <label>1</label>
    </ligand>
</feature>
<feature type="binding site" evidence="1">
    <location>
        <position position="268"/>
    </location>
    <ligand>
        <name>Mn(2+)</name>
        <dbReference type="ChEBI" id="CHEBI:29035"/>
        <label>2</label>
    </ligand>
</feature>
<feature type="binding site" evidence="1">
    <location>
        <position position="286"/>
    </location>
    <ligand>
        <name>Mn(2+)</name>
        <dbReference type="ChEBI" id="CHEBI:29035"/>
        <label>2</label>
    </ligand>
</feature>
<feature type="binding site" evidence="1">
    <location>
        <position position="345"/>
    </location>
    <ligand>
        <name>Mn(2+)</name>
        <dbReference type="ChEBI" id="CHEBI:29035"/>
        <label>1</label>
    </ligand>
</feature>
<feature type="binding site" evidence="1">
    <location>
        <position position="347"/>
    </location>
    <ligand>
        <name>Mn(2+)</name>
        <dbReference type="ChEBI" id="CHEBI:29035"/>
        <label>1</label>
    </ligand>
</feature>
<feature type="binding site" evidence="1">
    <location>
        <position position="347"/>
    </location>
    <ligand>
        <name>Mn(2+)</name>
        <dbReference type="ChEBI" id="CHEBI:29035"/>
        <label>2</label>
    </ligand>
</feature>
<accession>A5EIB4</accession>
<organism>
    <name type="scientific">Bradyrhizobium sp. (strain BTAi1 / ATCC BAA-1182)</name>
    <dbReference type="NCBI Taxonomy" id="288000"/>
    <lineage>
        <taxon>Bacteria</taxon>
        <taxon>Pseudomonadati</taxon>
        <taxon>Pseudomonadota</taxon>
        <taxon>Alphaproteobacteria</taxon>
        <taxon>Hyphomicrobiales</taxon>
        <taxon>Nitrobacteraceae</taxon>
        <taxon>Bradyrhizobium</taxon>
    </lineage>
</organism>
<evidence type="ECO:0000255" key="1">
    <source>
        <dbReference type="HAMAP-Rule" id="MF_00181"/>
    </source>
</evidence>
<comment type="function">
    <text evidence="1">Presumably involved in the processing and regular turnover of intracellular proteins. Catalyzes the removal of unsubstituted N-terminal amino acids from various peptides.</text>
</comment>
<comment type="catalytic activity">
    <reaction evidence="1">
        <text>Release of an N-terminal amino acid, Xaa-|-Yaa-, in which Xaa is preferably Leu, but may be other amino acids including Pro although not Arg or Lys, and Yaa may be Pro. Amino acid amides and methyl esters are also readily hydrolyzed, but rates on arylamides are exceedingly low.</text>
        <dbReference type="EC" id="3.4.11.1"/>
    </reaction>
</comment>
<comment type="catalytic activity">
    <reaction evidence="1">
        <text>Release of an N-terminal amino acid, preferentially leucine, but not glutamic or aspartic acids.</text>
        <dbReference type="EC" id="3.4.11.10"/>
    </reaction>
</comment>
<comment type="cofactor">
    <cofactor evidence="1">
        <name>Mn(2+)</name>
        <dbReference type="ChEBI" id="CHEBI:29035"/>
    </cofactor>
    <text evidence="1">Binds 2 manganese ions per subunit.</text>
</comment>
<comment type="subcellular location">
    <subcellularLocation>
        <location evidence="1">Cytoplasm</location>
    </subcellularLocation>
</comment>
<comment type="similarity">
    <text evidence="1">Belongs to the peptidase M17 family.</text>
</comment>
<reference key="1">
    <citation type="journal article" date="2007" name="Science">
        <title>Legumes symbioses: absence of nod genes in photosynthetic bradyrhizobia.</title>
        <authorList>
            <person name="Giraud E."/>
            <person name="Moulin L."/>
            <person name="Vallenet D."/>
            <person name="Barbe V."/>
            <person name="Cytryn E."/>
            <person name="Avarre J.-C."/>
            <person name="Jaubert M."/>
            <person name="Simon D."/>
            <person name="Cartieaux F."/>
            <person name="Prin Y."/>
            <person name="Bena G."/>
            <person name="Hannibal L."/>
            <person name="Fardoux J."/>
            <person name="Kojadinovic M."/>
            <person name="Vuillet L."/>
            <person name="Lajus A."/>
            <person name="Cruveiller S."/>
            <person name="Rouy Z."/>
            <person name="Mangenot S."/>
            <person name="Segurens B."/>
            <person name="Dossat C."/>
            <person name="Franck W.L."/>
            <person name="Chang W.-S."/>
            <person name="Saunders E."/>
            <person name="Bruce D."/>
            <person name="Richardson P."/>
            <person name="Normand P."/>
            <person name="Dreyfus B."/>
            <person name="Pignol D."/>
            <person name="Stacey G."/>
            <person name="Emerich D."/>
            <person name="Vermeglio A."/>
            <person name="Medigue C."/>
            <person name="Sadowsky M."/>
        </authorList>
    </citation>
    <scope>NUCLEOTIDE SEQUENCE [LARGE SCALE GENOMIC DNA]</scope>
    <source>
        <strain>BTAi1 / ATCC BAA-1182</strain>
    </source>
</reference>
<gene>
    <name evidence="1" type="primary">pepA</name>
    <name type="ordered locus">BBta_3832</name>
</gene>
<name>AMPA_BRASB</name>
<dbReference type="EC" id="3.4.11.1" evidence="1"/>
<dbReference type="EC" id="3.4.11.10" evidence="1"/>
<dbReference type="EMBL" id="CP000494">
    <property type="protein sequence ID" value="ABQ35908.1"/>
    <property type="molecule type" value="Genomic_DNA"/>
</dbReference>
<dbReference type="RefSeq" id="WP_012043913.1">
    <property type="nucleotide sequence ID" value="NC_009485.1"/>
</dbReference>
<dbReference type="SMR" id="A5EIB4"/>
<dbReference type="STRING" id="288000.BBta_3832"/>
<dbReference type="KEGG" id="bbt:BBta_3832"/>
<dbReference type="eggNOG" id="COG0260">
    <property type="taxonomic scope" value="Bacteria"/>
</dbReference>
<dbReference type="HOGENOM" id="CLU_013734_6_0_5"/>
<dbReference type="OrthoDB" id="9809354at2"/>
<dbReference type="Proteomes" id="UP000000246">
    <property type="component" value="Chromosome"/>
</dbReference>
<dbReference type="GO" id="GO:0005737">
    <property type="term" value="C:cytoplasm"/>
    <property type="evidence" value="ECO:0007669"/>
    <property type="project" value="UniProtKB-SubCell"/>
</dbReference>
<dbReference type="GO" id="GO:0030145">
    <property type="term" value="F:manganese ion binding"/>
    <property type="evidence" value="ECO:0007669"/>
    <property type="project" value="UniProtKB-UniRule"/>
</dbReference>
<dbReference type="GO" id="GO:0070006">
    <property type="term" value="F:metalloaminopeptidase activity"/>
    <property type="evidence" value="ECO:0007669"/>
    <property type="project" value="InterPro"/>
</dbReference>
<dbReference type="GO" id="GO:0006508">
    <property type="term" value="P:proteolysis"/>
    <property type="evidence" value="ECO:0007669"/>
    <property type="project" value="UniProtKB-KW"/>
</dbReference>
<dbReference type="CDD" id="cd00433">
    <property type="entry name" value="Peptidase_M17"/>
    <property type="match status" value="1"/>
</dbReference>
<dbReference type="Gene3D" id="3.40.220.10">
    <property type="entry name" value="Leucine Aminopeptidase, subunit E, domain 1"/>
    <property type="match status" value="1"/>
</dbReference>
<dbReference type="Gene3D" id="3.40.630.10">
    <property type="entry name" value="Zn peptidases"/>
    <property type="match status" value="1"/>
</dbReference>
<dbReference type="HAMAP" id="MF_00181">
    <property type="entry name" value="Cytosol_peptidase_M17"/>
    <property type="match status" value="1"/>
</dbReference>
<dbReference type="InterPro" id="IPR011356">
    <property type="entry name" value="Leucine_aapep/pepB"/>
</dbReference>
<dbReference type="InterPro" id="IPR043472">
    <property type="entry name" value="Macro_dom-like"/>
</dbReference>
<dbReference type="InterPro" id="IPR000819">
    <property type="entry name" value="Peptidase_M17_C"/>
</dbReference>
<dbReference type="InterPro" id="IPR023042">
    <property type="entry name" value="Peptidase_M17_leu_NH2_pept"/>
</dbReference>
<dbReference type="InterPro" id="IPR008283">
    <property type="entry name" value="Peptidase_M17_N"/>
</dbReference>
<dbReference type="NCBIfam" id="NF002073">
    <property type="entry name" value="PRK00913.1-2"/>
    <property type="match status" value="1"/>
</dbReference>
<dbReference type="NCBIfam" id="NF002074">
    <property type="entry name" value="PRK00913.1-4"/>
    <property type="match status" value="1"/>
</dbReference>
<dbReference type="NCBIfam" id="NF002075">
    <property type="entry name" value="PRK00913.2-2"/>
    <property type="match status" value="1"/>
</dbReference>
<dbReference type="NCBIfam" id="NF002077">
    <property type="entry name" value="PRK00913.2-4"/>
    <property type="match status" value="1"/>
</dbReference>
<dbReference type="NCBIfam" id="NF002083">
    <property type="entry name" value="PRK00913.3-5"/>
    <property type="match status" value="1"/>
</dbReference>
<dbReference type="PANTHER" id="PTHR11963:SF23">
    <property type="entry name" value="CYTOSOL AMINOPEPTIDASE"/>
    <property type="match status" value="1"/>
</dbReference>
<dbReference type="PANTHER" id="PTHR11963">
    <property type="entry name" value="LEUCINE AMINOPEPTIDASE-RELATED"/>
    <property type="match status" value="1"/>
</dbReference>
<dbReference type="Pfam" id="PF00883">
    <property type="entry name" value="Peptidase_M17"/>
    <property type="match status" value="1"/>
</dbReference>
<dbReference type="Pfam" id="PF02789">
    <property type="entry name" value="Peptidase_M17_N"/>
    <property type="match status" value="1"/>
</dbReference>
<dbReference type="PRINTS" id="PR00481">
    <property type="entry name" value="LAMNOPPTDASE"/>
</dbReference>
<dbReference type="SUPFAM" id="SSF52949">
    <property type="entry name" value="Macro domain-like"/>
    <property type="match status" value="1"/>
</dbReference>
<dbReference type="SUPFAM" id="SSF53187">
    <property type="entry name" value="Zn-dependent exopeptidases"/>
    <property type="match status" value="1"/>
</dbReference>
<dbReference type="PROSITE" id="PS00631">
    <property type="entry name" value="CYTOSOL_AP"/>
    <property type="match status" value="1"/>
</dbReference>
<protein>
    <recommendedName>
        <fullName evidence="1">Probable cytosol aminopeptidase</fullName>
        <ecNumber evidence="1">3.4.11.1</ecNumber>
    </recommendedName>
    <alternativeName>
        <fullName evidence="1">Leucine aminopeptidase</fullName>
        <shortName evidence="1">LAP</shortName>
        <ecNumber evidence="1">3.4.11.10</ecNumber>
    </alternativeName>
    <alternativeName>
        <fullName evidence="1">Leucyl aminopeptidase</fullName>
    </alternativeName>
</protein>
<keyword id="KW-0031">Aminopeptidase</keyword>
<keyword id="KW-0963">Cytoplasm</keyword>
<keyword id="KW-0378">Hydrolase</keyword>
<keyword id="KW-0464">Manganese</keyword>
<keyword id="KW-0479">Metal-binding</keyword>
<keyword id="KW-0645">Protease</keyword>
<keyword id="KW-1185">Reference proteome</keyword>
<proteinExistence type="inferred from homology"/>